<geneLocation type="plasmid">
    <name>pMLa</name>
</geneLocation>
<organism>
    <name type="scientific">Mesorhizobium japonicum (strain LMG 29417 / CECT 9101 / MAFF 303099)</name>
    <name type="common">Mesorhizobium loti (strain MAFF 303099)</name>
    <dbReference type="NCBI Taxonomy" id="266835"/>
    <lineage>
        <taxon>Bacteria</taxon>
        <taxon>Pseudomonadati</taxon>
        <taxon>Pseudomonadota</taxon>
        <taxon>Alphaproteobacteria</taxon>
        <taxon>Hyphomicrobiales</taxon>
        <taxon>Phyllobacteriaceae</taxon>
        <taxon>Mesorhizobium</taxon>
    </lineage>
</organism>
<dbReference type="EC" id="7.6.2.14" evidence="1"/>
<dbReference type="EMBL" id="BA000013">
    <property type="protein sequence ID" value="BAB54571.1"/>
    <property type="molecule type" value="Genomic_DNA"/>
</dbReference>
<dbReference type="RefSeq" id="WP_010915985.1">
    <property type="nucleotide sequence ID" value="NC_002679.1"/>
</dbReference>
<dbReference type="SMR" id="Q981Y8"/>
<dbReference type="KEGG" id="mlo:mll9179"/>
<dbReference type="PATRIC" id="fig|266835.9.peg.6990"/>
<dbReference type="HOGENOM" id="CLU_000604_1_22_5"/>
<dbReference type="Proteomes" id="UP000000552">
    <property type="component" value="Plasmid pMLa"/>
</dbReference>
<dbReference type="GO" id="GO:0005886">
    <property type="term" value="C:plasma membrane"/>
    <property type="evidence" value="ECO:0007669"/>
    <property type="project" value="UniProtKB-SubCell"/>
</dbReference>
<dbReference type="GO" id="GO:0005524">
    <property type="term" value="F:ATP binding"/>
    <property type="evidence" value="ECO:0007669"/>
    <property type="project" value="UniProtKB-KW"/>
</dbReference>
<dbReference type="GO" id="GO:0016887">
    <property type="term" value="F:ATP hydrolysis activity"/>
    <property type="evidence" value="ECO:0007669"/>
    <property type="project" value="InterPro"/>
</dbReference>
<dbReference type="Gene3D" id="3.40.50.300">
    <property type="entry name" value="P-loop containing nucleotide triphosphate hydrolases"/>
    <property type="match status" value="1"/>
</dbReference>
<dbReference type="InterPro" id="IPR003593">
    <property type="entry name" value="AAA+_ATPase"/>
</dbReference>
<dbReference type="InterPro" id="IPR003439">
    <property type="entry name" value="ABC_transporter-like_ATP-bd"/>
</dbReference>
<dbReference type="InterPro" id="IPR017871">
    <property type="entry name" value="ABC_transporter-like_CS"/>
</dbReference>
<dbReference type="InterPro" id="IPR050166">
    <property type="entry name" value="ABC_transporter_ATP-bind"/>
</dbReference>
<dbReference type="InterPro" id="IPR027417">
    <property type="entry name" value="P-loop_NTPase"/>
</dbReference>
<dbReference type="PANTHER" id="PTHR42788:SF17">
    <property type="entry name" value="ALIPHATIC SULFONATES IMPORT ATP-BINDING PROTEIN SSUB"/>
    <property type="match status" value="1"/>
</dbReference>
<dbReference type="PANTHER" id="PTHR42788">
    <property type="entry name" value="TAURINE IMPORT ATP-BINDING PROTEIN-RELATED"/>
    <property type="match status" value="1"/>
</dbReference>
<dbReference type="Pfam" id="PF00005">
    <property type="entry name" value="ABC_tran"/>
    <property type="match status" value="1"/>
</dbReference>
<dbReference type="SMART" id="SM00382">
    <property type="entry name" value="AAA"/>
    <property type="match status" value="1"/>
</dbReference>
<dbReference type="SUPFAM" id="SSF52540">
    <property type="entry name" value="P-loop containing nucleoside triphosphate hydrolases"/>
    <property type="match status" value="1"/>
</dbReference>
<dbReference type="PROSITE" id="PS00211">
    <property type="entry name" value="ABC_TRANSPORTER_1"/>
    <property type="match status" value="1"/>
</dbReference>
<dbReference type="PROSITE" id="PS50893">
    <property type="entry name" value="ABC_TRANSPORTER_2"/>
    <property type="match status" value="1"/>
</dbReference>
<dbReference type="PROSITE" id="PS51291">
    <property type="entry name" value="SSUB"/>
    <property type="match status" value="1"/>
</dbReference>
<proteinExistence type="inferred from homology"/>
<name>SSUB2_RHILO</name>
<reference key="1">
    <citation type="journal article" date="2000" name="DNA Res.">
        <title>Complete genome structure of the nitrogen-fixing symbiotic bacterium Mesorhizobium loti.</title>
        <authorList>
            <person name="Kaneko T."/>
            <person name="Nakamura Y."/>
            <person name="Sato S."/>
            <person name="Asamizu E."/>
            <person name="Kato T."/>
            <person name="Sasamoto S."/>
            <person name="Watanabe A."/>
            <person name="Idesawa K."/>
            <person name="Ishikawa A."/>
            <person name="Kawashima K."/>
            <person name="Kimura T."/>
            <person name="Kishida Y."/>
            <person name="Kiyokawa C."/>
            <person name="Kohara M."/>
            <person name="Matsumoto M."/>
            <person name="Matsuno A."/>
            <person name="Mochizuki Y."/>
            <person name="Nakayama S."/>
            <person name="Nakazaki N."/>
            <person name="Shimpo S."/>
            <person name="Sugimoto M."/>
            <person name="Takeuchi C."/>
            <person name="Yamada M."/>
            <person name="Tabata S."/>
        </authorList>
    </citation>
    <scope>NUCLEOTIDE SEQUENCE [LARGE SCALE GENOMIC DNA]</scope>
    <source>
        <strain>LMG 29417 / CECT 9101 / MAFF 303099</strain>
    </source>
</reference>
<protein>
    <recommendedName>
        <fullName evidence="1">Aliphatic sulfonates import ATP-binding protein SsuB 2</fullName>
        <ecNumber evidence="1">7.6.2.14</ecNumber>
    </recommendedName>
</protein>
<accession>Q981Y8</accession>
<evidence type="ECO:0000255" key="1">
    <source>
        <dbReference type="HAMAP-Rule" id="MF_01724"/>
    </source>
</evidence>
<feature type="chain" id="PRO_0000279953" description="Aliphatic sulfonates import ATP-binding protein SsuB 2">
    <location>
        <begin position="1"/>
        <end position="248"/>
    </location>
</feature>
<feature type="domain" description="ABC transporter" evidence="1">
    <location>
        <begin position="14"/>
        <end position="230"/>
    </location>
</feature>
<feature type="binding site" evidence="1">
    <location>
        <begin position="46"/>
        <end position="53"/>
    </location>
    <ligand>
        <name>ATP</name>
        <dbReference type="ChEBI" id="CHEBI:30616"/>
    </ligand>
</feature>
<sequence>MASHLGGLRDAPVVRVESLVRSFGPRTILDGLSLDIEKGEFVALLGRSGSGKSTLLRALADLDDKVSGSGRLETPDKKSVVFQDARLLPWKRVLENVVLGLDLPDAAERGRAALEEVGLNGRETAWPVELSGGEQQRVALARSLVRDPDLLLADEPFGALDALTRLRMHDLLRQLCARHQPAVLLVTHDVDEAVTLADRVLVLDKGAIAADIAIDIPKPRDHGHRRFGEIRSELLRHLGVETRPVLPV</sequence>
<keyword id="KW-0067">ATP-binding</keyword>
<keyword id="KW-0997">Cell inner membrane</keyword>
<keyword id="KW-1003">Cell membrane</keyword>
<keyword id="KW-0472">Membrane</keyword>
<keyword id="KW-0547">Nucleotide-binding</keyword>
<keyword id="KW-0614">Plasmid</keyword>
<keyword id="KW-1278">Translocase</keyword>
<keyword id="KW-0813">Transport</keyword>
<comment type="function">
    <text evidence="1">Part of the ABC transporter complex SsuABC involved in aliphatic sulfonates import. Responsible for energy coupling to the transport system.</text>
</comment>
<comment type="catalytic activity">
    <reaction evidence="1">
        <text>ATP + H2O + aliphatic sulfonate-[sulfonate-binding protein]Side 1 = ADP + phosphate + aliphatic sulfonateSide 2 + [sulfonate-binding protein]Side 1.</text>
        <dbReference type="EC" id="7.6.2.14"/>
    </reaction>
</comment>
<comment type="subunit">
    <text evidence="1">The complex is composed of two ATP-binding proteins (SsuB), two transmembrane proteins (SsuC) and a solute-binding protein (SsuA).</text>
</comment>
<comment type="subcellular location">
    <subcellularLocation>
        <location evidence="1">Cell inner membrane</location>
        <topology evidence="1">Peripheral membrane protein</topology>
    </subcellularLocation>
</comment>
<comment type="similarity">
    <text evidence="1">Belongs to the ABC transporter superfamily. Aliphatic sulfonates importer (TC 3.A.1.17.2) family.</text>
</comment>
<gene>
    <name evidence="1" type="primary">ssuB2</name>
    <name type="ordered locus">mll9179</name>
</gene>